<name>RL2_CORJK</name>
<proteinExistence type="inferred from homology"/>
<gene>
    <name evidence="1" type="primary">rplB</name>
    <name type="ordered locus">jk1830</name>
</gene>
<comment type="function">
    <text evidence="1">One of the primary rRNA binding proteins. Required for association of the 30S and 50S subunits to form the 70S ribosome, for tRNA binding and peptide bond formation. It has been suggested to have peptidyltransferase activity; this is somewhat controversial. Makes several contacts with the 16S rRNA in the 70S ribosome.</text>
</comment>
<comment type="subunit">
    <text evidence="1">Part of the 50S ribosomal subunit. Forms a bridge to the 30S subunit in the 70S ribosome.</text>
</comment>
<comment type="similarity">
    <text evidence="1">Belongs to the universal ribosomal protein uL2 family.</text>
</comment>
<protein>
    <recommendedName>
        <fullName evidence="1">Large ribosomal subunit protein uL2</fullName>
    </recommendedName>
    <alternativeName>
        <fullName evidence="3">50S ribosomal protein L2</fullName>
    </alternativeName>
</protein>
<dbReference type="EMBL" id="CR931997">
    <property type="protein sequence ID" value="CAI38007.1"/>
    <property type="molecule type" value="Genomic_DNA"/>
</dbReference>
<dbReference type="RefSeq" id="WP_011274164.1">
    <property type="nucleotide sequence ID" value="NC_007164.1"/>
</dbReference>
<dbReference type="SMR" id="Q4JT50"/>
<dbReference type="STRING" id="306537.jk1830"/>
<dbReference type="KEGG" id="cjk:jk1830"/>
<dbReference type="PATRIC" id="fig|306537.10.peg.1853"/>
<dbReference type="eggNOG" id="COG0090">
    <property type="taxonomic scope" value="Bacteria"/>
</dbReference>
<dbReference type="HOGENOM" id="CLU_036235_2_1_11"/>
<dbReference type="OrthoDB" id="9778722at2"/>
<dbReference type="Proteomes" id="UP000000545">
    <property type="component" value="Chromosome"/>
</dbReference>
<dbReference type="GO" id="GO:0015934">
    <property type="term" value="C:large ribosomal subunit"/>
    <property type="evidence" value="ECO:0007669"/>
    <property type="project" value="InterPro"/>
</dbReference>
<dbReference type="GO" id="GO:0019843">
    <property type="term" value="F:rRNA binding"/>
    <property type="evidence" value="ECO:0007669"/>
    <property type="project" value="UniProtKB-UniRule"/>
</dbReference>
<dbReference type="GO" id="GO:0003735">
    <property type="term" value="F:structural constituent of ribosome"/>
    <property type="evidence" value="ECO:0007669"/>
    <property type="project" value="InterPro"/>
</dbReference>
<dbReference type="GO" id="GO:0016740">
    <property type="term" value="F:transferase activity"/>
    <property type="evidence" value="ECO:0007669"/>
    <property type="project" value="InterPro"/>
</dbReference>
<dbReference type="GO" id="GO:0002181">
    <property type="term" value="P:cytoplasmic translation"/>
    <property type="evidence" value="ECO:0007669"/>
    <property type="project" value="TreeGrafter"/>
</dbReference>
<dbReference type="FunFam" id="2.30.30.30:FF:000001">
    <property type="entry name" value="50S ribosomal protein L2"/>
    <property type="match status" value="1"/>
</dbReference>
<dbReference type="FunFam" id="2.40.50.140:FF:000003">
    <property type="entry name" value="50S ribosomal protein L2"/>
    <property type="match status" value="1"/>
</dbReference>
<dbReference type="FunFam" id="4.10.950.10:FF:000001">
    <property type="entry name" value="50S ribosomal protein L2"/>
    <property type="match status" value="1"/>
</dbReference>
<dbReference type="Gene3D" id="2.30.30.30">
    <property type="match status" value="1"/>
</dbReference>
<dbReference type="Gene3D" id="2.40.50.140">
    <property type="entry name" value="Nucleic acid-binding proteins"/>
    <property type="match status" value="1"/>
</dbReference>
<dbReference type="Gene3D" id="4.10.950.10">
    <property type="entry name" value="Ribosomal protein L2, domain 3"/>
    <property type="match status" value="1"/>
</dbReference>
<dbReference type="HAMAP" id="MF_01320_B">
    <property type="entry name" value="Ribosomal_uL2_B"/>
    <property type="match status" value="1"/>
</dbReference>
<dbReference type="InterPro" id="IPR012340">
    <property type="entry name" value="NA-bd_OB-fold"/>
</dbReference>
<dbReference type="InterPro" id="IPR014722">
    <property type="entry name" value="Rib_uL2_dom2"/>
</dbReference>
<dbReference type="InterPro" id="IPR002171">
    <property type="entry name" value="Ribosomal_uL2"/>
</dbReference>
<dbReference type="InterPro" id="IPR005880">
    <property type="entry name" value="Ribosomal_uL2_bac/org-type"/>
</dbReference>
<dbReference type="InterPro" id="IPR022669">
    <property type="entry name" value="Ribosomal_uL2_C"/>
</dbReference>
<dbReference type="InterPro" id="IPR022671">
    <property type="entry name" value="Ribosomal_uL2_CS"/>
</dbReference>
<dbReference type="InterPro" id="IPR014726">
    <property type="entry name" value="Ribosomal_uL2_dom3"/>
</dbReference>
<dbReference type="InterPro" id="IPR022666">
    <property type="entry name" value="Ribosomal_uL2_RNA-bd_dom"/>
</dbReference>
<dbReference type="InterPro" id="IPR008991">
    <property type="entry name" value="Translation_prot_SH3-like_sf"/>
</dbReference>
<dbReference type="NCBIfam" id="TIGR01171">
    <property type="entry name" value="rplB_bact"/>
    <property type="match status" value="1"/>
</dbReference>
<dbReference type="PANTHER" id="PTHR13691:SF5">
    <property type="entry name" value="LARGE RIBOSOMAL SUBUNIT PROTEIN UL2M"/>
    <property type="match status" value="1"/>
</dbReference>
<dbReference type="PANTHER" id="PTHR13691">
    <property type="entry name" value="RIBOSOMAL PROTEIN L2"/>
    <property type="match status" value="1"/>
</dbReference>
<dbReference type="Pfam" id="PF00181">
    <property type="entry name" value="Ribosomal_L2"/>
    <property type="match status" value="1"/>
</dbReference>
<dbReference type="Pfam" id="PF03947">
    <property type="entry name" value="Ribosomal_L2_C"/>
    <property type="match status" value="1"/>
</dbReference>
<dbReference type="PIRSF" id="PIRSF002158">
    <property type="entry name" value="Ribosomal_L2"/>
    <property type="match status" value="1"/>
</dbReference>
<dbReference type="SMART" id="SM01383">
    <property type="entry name" value="Ribosomal_L2"/>
    <property type="match status" value="1"/>
</dbReference>
<dbReference type="SMART" id="SM01382">
    <property type="entry name" value="Ribosomal_L2_C"/>
    <property type="match status" value="1"/>
</dbReference>
<dbReference type="SUPFAM" id="SSF50249">
    <property type="entry name" value="Nucleic acid-binding proteins"/>
    <property type="match status" value="1"/>
</dbReference>
<dbReference type="SUPFAM" id="SSF50104">
    <property type="entry name" value="Translation proteins SH3-like domain"/>
    <property type="match status" value="1"/>
</dbReference>
<dbReference type="PROSITE" id="PS00467">
    <property type="entry name" value="RIBOSOMAL_L2"/>
    <property type="match status" value="1"/>
</dbReference>
<accession>Q4JT50</accession>
<feature type="chain" id="PRO_0000237175" description="Large ribosomal subunit protein uL2">
    <location>
        <begin position="1"/>
        <end position="280"/>
    </location>
</feature>
<feature type="region of interest" description="Disordered" evidence="2">
    <location>
        <begin position="1"/>
        <end position="59"/>
    </location>
</feature>
<feature type="region of interest" description="Disordered" evidence="2">
    <location>
        <begin position="223"/>
        <end position="280"/>
    </location>
</feature>
<feature type="compositionally biased region" description="Basic residues" evidence="2">
    <location>
        <begin position="45"/>
        <end position="59"/>
    </location>
</feature>
<feature type="compositionally biased region" description="Basic residues" evidence="2">
    <location>
        <begin position="269"/>
        <end position="280"/>
    </location>
</feature>
<keyword id="KW-1185">Reference proteome</keyword>
<keyword id="KW-0687">Ribonucleoprotein</keyword>
<keyword id="KW-0689">Ribosomal protein</keyword>
<keyword id="KW-0694">RNA-binding</keyword>
<keyword id="KW-0699">rRNA-binding</keyword>
<reference key="1">
    <citation type="journal article" date="2005" name="J. Bacteriol.">
        <title>Complete genome sequence and analysis of the multiresistant nosocomial pathogen Corynebacterium jeikeium K411, a lipid-requiring bacterium of the human skin flora.</title>
        <authorList>
            <person name="Tauch A."/>
            <person name="Kaiser O."/>
            <person name="Hain T."/>
            <person name="Goesmann A."/>
            <person name="Weisshaar B."/>
            <person name="Albersmeier A."/>
            <person name="Bekel T."/>
            <person name="Bischoff N."/>
            <person name="Brune I."/>
            <person name="Chakraborty T."/>
            <person name="Kalinowski J."/>
            <person name="Meyer F."/>
            <person name="Rupp O."/>
            <person name="Schneiker S."/>
            <person name="Viehoever P."/>
            <person name="Puehler A."/>
        </authorList>
    </citation>
    <scope>NUCLEOTIDE SEQUENCE [LARGE SCALE GENOMIC DNA]</scope>
    <source>
        <strain>K411</strain>
    </source>
</reference>
<evidence type="ECO:0000255" key="1">
    <source>
        <dbReference type="HAMAP-Rule" id="MF_01320"/>
    </source>
</evidence>
<evidence type="ECO:0000256" key="2">
    <source>
        <dbReference type="SAM" id="MobiDB-lite"/>
    </source>
</evidence>
<evidence type="ECO:0000305" key="3"/>
<organism>
    <name type="scientific">Corynebacterium jeikeium (strain K411)</name>
    <dbReference type="NCBI Taxonomy" id="306537"/>
    <lineage>
        <taxon>Bacteria</taxon>
        <taxon>Bacillati</taxon>
        <taxon>Actinomycetota</taxon>
        <taxon>Actinomycetes</taxon>
        <taxon>Mycobacteriales</taxon>
        <taxon>Corynebacteriaceae</taxon>
        <taxon>Corynebacterium</taxon>
    </lineage>
</organism>
<sequence length="280" mass="31126">MAIRKYKPTTPGRRQSSVSEFAEITRSTPEKSLLRPLSKTGGRNVHGHITTRHKGGGHKRRYRVIDFRRNDKDGVLAKVAHIEYDPNRTANIALLHYRDGEKRYIIAPRGLQQGALLESGPNADIKVGNNLPLRNIPTGTTIHAVELKPGGGAKMARSAGASIQLLGKEGKYAVLRMPSTEIRRVDIRCRATIGEVGNADQINIRWGKAGRMRWKGVRPTVRGVVMNPVDHPHGGGEGKTSGGRHPVSPWGQPEGRTRKPNRPSDRMIVRRRRSNKNKKR</sequence>